<feature type="chain" id="PRO_1000093493" description="Peptide chain release factor 1">
    <location>
        <begin position="1"/>
        <end position="360"/>
    </location>
</feature>
<feature type="region of interest" description="Disordered" evidence="2">
    <location>
        <begin position="283"/>
        <end position="305"/>
    </location>
</feature>
<feature type="compositionally biased region" description="Basic and acidic residues" evidence="2">
    <location>
        <begin position="283"/>
        <end position="293"/>
    </location>
</feature>
<feature type="modified residue" description="N5-methylglutamine" evidence="1">
    <location>
        <position position="235"/>
    </location>
</feature>
<protein>
    <recommendedName>
        <fullName evidence="1">Peptide chain release factor 1</fullName>
        <shortName evidence="1">RF-1</shortName>
    </recommendedName>
</protein>
<proteinExistence type="inferred from homology"/>
<comment type="function">
    <text evidence="1">Peptide chain release factor 1 directs the termination of translation in response to the peptide chain termination codons UAG and UAA.</text>
</comment>
<comment type="subcellular location">
    <subcellularLocation>
        <location evidence="1">Cytoplasm</location>
    </subcellularLocation>
</comment>
<comment type="PTM">
    <text evidence="1">Methylated by PrmC. Methylation increases the termination efficiency of RF1.</text>
</comment>
<comment type="similarity">
    <text evidence="1">Belongs to the prokaryotic/mitochondrial release factor family.</text>
</comment>
<accession>B2UDM7</accession>
<reference key="1">
    <citation type="submission" date="2008-05" db="EMBL/GenBank/DDBJ databases">
        <title>Complete sequence of chromosome 1 of Ralstonia pickettii 12J.</title>
        <authorList>
            <person name="Lucas S."/>
            <person name="Copeland A."/>
            <person name="Lapidus A."/>
            <person name="Glavina del Rio T."/>
            <person name="Dalin E."/>
            <person name="Tice H."/>
            <person name="Bruce D."/>
            <person name="Goodwin L."/>
            <person name="Pitluck S."/>
            <person name="Meincke L."/>
            <person name="Brettin T."/>
            <person name="Detter J.C."/>
            <person name="Han C."/>
            <person name="Kuske C.R."/>
            <person name="Schmutz J."/>
            <person name="Larimer F."/>
            <person name="Land M."/>
            <person name="Hauser L."/>
            <person name="Kyrpides N."/>
            <person name="Mikhailova N."/>
            <person name="Marsh T."/>
            <person name="Richardson P."/>
        </authorList>
    </citation>
    <scope>NUCLEOTIDE SEQUENCE [LARGE SCALE GENOMIC DNA]</scope>
    <source>
        <strain>12J</strain>
    </source>
</reference>
<keyword id="KW-0963">Cytoplasm</keyword>
<keyword id="KW-0488">Methylation</keyword>
<keyword id="KW-0648">Protein biosynthesis</keyword>
<dbReference type="EMBL" id="CP001068">
    <property type="protein sequence ID" value="ACD28268.1"/>
    <property type="molecule type" value="Genomic_DNA"/>
</dbReference>
<dbReference type="SMR" id="B2UDM7"/>
<dbReference type="STRING" id="402626.Rpic_3146"/>
<dbReference type="KEGG" id="rpi:Rpic_3146"/>
<dbReference type="PATRIC" id="fig|402626.5.peg.4286"/>
<dbReference type="eggNOG" id="COG0216">
    <property type="taxonomic scope" value="Bacteria"/>
</dbReference>
<dbReference type="HOGENOM" id="CLU_036856_0_1_4"/>
<dbReference type="GO" id="GO:0005737">
    <property type="term" value="C:cytoplasm"/>
    <property type="evidence" value="ECO:0007669"/>
    <property type="project" value="UniProtKB-SubCell"/>
</dbReference>
<dbReference type="GO" id="GO:0016149">
    <property type="term" value="F:translation release factor activity, codon specific"/>
    <property type="evidence" value="ECO:0007669"/>
    <property type="project" value="UniProtKB-UniRule"/>
</dbReference>
<dbReference type="FunFam" id="3.30.160.20:FF:000004">
    <property type="entry name" value="Peptide chain release factor 1"/>
    <property type="match status" value="1"/>
</dbReference>
<dbReference type="FunFam" id="3.30.70.1660:FF:000002">
    <property type="entry name" value="Peptide chain release factor 1"/>
    <property type="match status" value="1"/>
</dbReference>
<dbReference type="FunFam" id="3.30.70.1660:FF:000004">
    <property type="entry name" value="Peptide chain release factor 1"/>
    <property type="match status" value="1"/>
</dbReference>
<dbReference type="Gene3D" id="3.30.160.20">
    <property type="match status" value="1"/>
</dbReference>
<dbReference type="Gene3D" id="3.30.70.1660">
    <property type="match status" value="1"/>
</dbReference>
<dbReference type="Gene3D" id="6.10.140.1950">
    <property type="match status" value="1"/>
</dbReference>
<dbReference type="HAMAP" id="MF_00093">
    <property type="entry name" value="Rel_fac_1"/>
    <property type="match status" value="1"/>
</dbReference>
<dbReference type="InterPro" id="IPR005139">
    <property type="entry name" value="PCRF"/>
</dbReference>
<dbReference type="InterPro" id="IPR000352">
    <property type="entry name" value="Pep_chain_release_fac_I"/>
</dbReference>
<dbReference type="InterPro" id="IPR045853">
    <property type="entry name" value="Pep_chain_release_fac_I_sf"/>
</dbReference>
<dbReference type="InterPro" id="IPR050057">
    <property type="entry name" value="Prokaryotic/Mito_RF"/>
</dbReference>
<dbReference type="InterPro" id="IPR004373">
    <property type="entry name" value="RF-1"/>
</dbReference>
<dbReference type="NCBIfam" id="TIGR00019">
    <property type="entry name" value="prfA"/>
    <property type="match status" value="1"/>
</dbReference>
<dbReference type="NCBIfam" id="NF001859">
    <property type="entry name" value="PRK00591.1"/>
    <property type="match status" value="1"/>
</dbReference>
<dbReference type="PANTHER" id="PTHR43804">
    <property type="entry name" value="LD18447P"/>
    <property type="match status" value="1"/>
</dbReference>
<dbReference type="PANTHER" id="PTHR43804:SF7">
    <property type="entry name" value="LD18447P"/>
    <property type="match status" value="1"/>
</dbReference>
<dbReference type="Pfam" id="PF03462">
    <property type="entry name" value="PCRF"/>
    <property type="match status" value="1"/>
</dbReference>
<dbReference type="Pfam" id="PF00472">
    <property type="entry name" value="RF-1"/>
    <property type="match status" value="1"/>
</dbReference>
<dbReference type="SMART" id="SM00937">
    <property type="entry name" value="PCRF"/>
    <property type="match status" value="1"/>
</dbReference>
<dbReference type="SUPFAM" id="SSF75620">
    <property type="entry name" value="Release factor"/>
    <property type="match status" value="1"/>
</dbReference>
<dbReference type="PROSITE" id="PS00745">
    <property type="entry name" value="RF_PROK_I"/>
    <property type="match status" value="1"/>
</dbReference>
<organism>
    <name type="scientific">Ralstonia pickettii (strain 12J)</name>
    <dbReference type="NCBI Taxonomy" id="402626"/>
    <lineage>
        <taxon>Bacteria</taxon>
        <taxon>Pseudomonadati</taxon>
        <taxon>Pseudomonadota</taxon>
        <taxon>Betaproteobacteria</taxon>
        <taxon>Burkholderiales</taxon>
        <taxon>Burkholderiaceae</taxon>
        <taxon>Ralstonia</taxon>
    </lineage>
</organism>
<name>RF1_RALPJ</name>
<gene>
    <name evidence="1" type="primary">prfA</name>
    <name type="ordered locus">Rpic_3146</name>
</gene>
<evidence type="ECO:0000255" key="1">
    <source>
        <dbReference type="HAMAP-Rule" id="MF_00093"/>
    </source>
</evidence>
<evidence type="ECO:0000256" key="2">
    <source>
        <dbReference type="SAM" id="MobiDB-lite"/>
    </source>
</evidence>
<sequence>MKPSMLSKLDQLAERIVEINALLAREDATANLDQYRKLTREHAELEPVVAQFAAWKQAEEDIATAQELAADPDMKAFAEDELRAARERMESLEGELQRLLLPKDPNDHRNIFVEIRAGTGGDESALFAGDLLRMYTRYAERQRWQVEIVSESPSDLGGYKEVIARLVGEGAYSRLKFESGGHRVQRVPATEAQGRIHTSACTVAVMPEADALADIQINPADLRIDTFRASGAGGQHINKTDSAVRITHLPTGLVVECQDDRSQHRNKDRAMQVLAARLKDRQEREAQAKEASARKSLIGSGDRSDRIRTYNFPQGRVTDHRINLTLYKIDAIMDGDIDELVGALAAEHQAEQLAALGEDA</sequence>